<proteinExistence type="evidence at protein level"/>
<feature type="chain" id="PRO_0000083927" description="4-hydroxybenzoyl-CoA reductase subunit gamma">
    <location>
        <begin position="1"/>
        <end position="161"/>
    </location>
</feature>
<feature type="domain" description="2Fe-2S ferredoxin-type" evidence="1">
    <location>
        <begin position="3"/>
        <end position="79"/>
    </location>
</feature>
<feature type="binding site">
    <location>
        <position position="41"/>
    </location>
    <ligand>
        <name>[2Fe-2S] cluster</name>
        <dbReference type="ChEBI" id="CHEBI:190135"/>
        <label>1</label>
    </ligand>
</feature>
<feature type="binding site">
    <location>
        <position position="46"/>
    </location>
    <ligand>
        <name>[2Fe-2S] cluster</name>
        <dbReference type="ChEBI" id="CHEBI:190135"/>
        <label>1</label>
    </ligand>
</feature>
<feature type="binding site">
    <location>
        <position position="49"/>
    </location>
    <ligand>
        <name>[2Fe-2S] cluster</name>
        <dbReference type="ChEBI" id="CHEBI:190135"/>
        <label>1</label>
    </ligand>
</feature>
<feature type="binding site">
    <location>
        <position position="61"/>
    </location>
    <ligand>
        <name>[2Fe-2S] cluster</name>
        <dbReference type="ChEBI" id="CHEBI:190135"/>
        <label>1</label>
    </ligand>
</feature>
<feature type="binding site">
    <location>
        <position position="100"/>
    </location>
    <ligand>
        <name>[2Fe-2S] cluster</name>
        <dbReference type="ChEBI" id="CHEBI:190135"/>
        <label>2</label>
    </ligand>
</feature>
<feature type="binding site">
    <location>
        <position position="103"/>
    </location>
    <ligand>
        <name>[2Fe-2S] cluster</name>
        <dbReference type="ChEBI" id="CHEBI:190135"/>
        <label>2</label>
    </ligand>
</feature>
<feature type="binding site">
    <location>
        <position position="135"/>
    </location>
    <ligand>
        <name>[2Fe-2S] cluster</name>
        <dbReference type="ChEBI" id="CHEBI:190135"/>
        <label>2</label>
    </ligand>
</feature>
<feature type="binding site">
    <location>
        <position position="137"/>
    </location>
    <ligand>
        <name>[2Fe-2S] cluster</name>
        <dbReference type="ChEBI" id="CHEBI:190135"/>
        <label>2</label>
    </ligand>
</feature>
<feature type="strand" evidence="5">
    <location>
        <begin position="2"/>
        <end position="9"/>
    </location>
</feature>
<feature type="strand" evidence="5">
    <location>
        <begin position="12"/>
        <end position="19"/>
    </location>
</feature>
<feature type="helix" evidence="5">
    <location>
        <begin position="24"/>
        <end position="30"/>
    </location>
</feature>
<feature type="strand" evidence="5">
    <location>
        <begin position="41"/>
        <end position="46"/>
    </location>
</feature>
<feature type="strand" evidence="5">
    <location>
        <begin position="50"/>
        <end position="53"/>
    </location>
</feature>
<feature type="strand" evidence="5">
    <location>
        <begin position="56"/>
        <end position="59"/>
    </location>
</feature>
<feature type="helix" evidence="5">
    <location>
        <begin position="60"/>
        <end position="62"/>
    </location>
</feature>
<feature type="helix" evidence="5">
    <location>
        <begin position="65"/>
        <end position="68"/>
    </location>
</feature>
<feature type="strand" evidence="5">
    <location>
        <begin position="71"/>
        <end position="74"/>
    </location>
</feature>
<feature type="helix" evidence="5">
    <location>
        <begin position="76"/>
        <end position="78"/>
    </location>
</feature>
<feature type="strand" evidence="5">
    <location>
        <begin position="79"/>
        <end position="81"/>
    </location>
</feature>
<feature type="helix" evidence="5">
    <location>
        <begin position="87"/>
        <end position="94"/>
    </location>
</feature>
<feature type="helix" evidence="5">
    <location>
        <begin position="104"/>
        <end position="117"/>
    </location>
</feature>
<feature type="helix" evidence="5">
    <location>
        <begin position="123"/>
        <end position="129"/>
    </location>
</feature>
<feature type="turn" evidence="5">
    <location>
        <begin position="130"/>
        <end position="132"/>
    </location>
</feature>
<feature type="strand" evidence="5">
    <location>
        <begin position="136"/>
        <end position="138"/>
    </location>
</feature>
<feature type="helix" evidence="5">
    <location>
        <begin position="141"/>
        <end position="155"/>
    </location>
</feature>
<keyword id="KW-0001">2Fe-2S</keyword>
<keyword id="KW-0002">3D-structure</keyword>
<keyword id="KW-0903">Direct protein sequencing</keyword>
<keyword id="KW-0408">Iron</keyword>
<keyword id="KW-0411">Iron-sulfur</keyword>
<keyword id="KW-0479">Metal-binding</keyword>
<keyword id="KW-0560">Oxidoreductase</keyword>
<organism>
    <name type="scientific">Thauera aromatica</name>
    <dbReference type="NCBI Taxonomy" id="59405"/>
    <lineage>
        <taxon>Bacteria</taxon>
        <taxon>Pseudomonadati</taxon>
        <taxon>Pseudomonadota</taxon>
        <taxon>Betaproteobacteria</taxon>
        <taxon>Rhodocyclales</taxon>
        <taxon>Zoogloeaceae</taxon>
        <taxon>Thauera</taxon>
    </lineage>
</organism>
<comment type="function">
    <text evidence="4">Component of a complex that catalyzes the reductive dehydroxylation of 4-hydroxybenzoyl-CoA to benzoyl-CoA. Reaction is not reversible. Is a key enzyme in the anaerobic degradation of phenolic compounds.</text>
</comment>
<comment type="catalytic activity">
    <reaction evidence="4">
        <text>oxidized 2[4Fe-4S]-[ferredoxin] + benzoyl-CoA + H2O = 4-hydroxybenzoyl-CoA + reduced 2[4Fe-4S]-[ferredoxin] + 2 H(+)</text>
        <dbReference type="Rhea" id="RHEA:29603"/>
        <dbReference type="Rhea" id="RHEA-COMP:10002"/>
        <dbReference type="Rhea" id="RHEA-COMP:10004"/>
        <dbReference type="ChEBI" id="CHEBI:15377"/>
        <dbReference type="ChEBI" id="CHEBI:15378"/>
        <dbReference type="ChEBI" id="CHEBI:33722"/>
        <dbReference type="ChEBI" id="CHEBI:33723"/>
        <dbReference type="ChEBI" id="CHEBI:57356"/>
        <dbReference type="ChEBI" id="CHEBI:57369"/>
        <dbReference type="EC" id="1.1.7.1"/>
    </reaction>
</comment>
<comment type="cofactor">
    <cofactor evidence="2 3">
        <name>[2Fe-2S] cluster</name>
        <dbReference type="ChEBI" id="CHEBI:190135"/>
    </cofactor>
    <text evidence="2 3">Binds 2 [2Fe-2S] clusters per subunit.</text>
</comment>
<comment type="activity regulation">
    <text evidence="4">Inactivated by low concentrations of cyanide in vitro.</text>
</comment>
<comment type="subunit">
    <text evidence="3 4">Heterohexamer of two alpha, two beta and two gamma subunits.</text>
</comment>
<reference key="1">
    <citation type="journal article" date="1998" name="Eur. J. Biochem.">
        <title>4-hydroxybenzoyl-CoA reductase (dehydroxylating) from the denitrifying bacterium Thauera aromatica -- prosthetic groups, electron donor, and genes of a member of the molybdenum-flavin-iron-sulfur proteins.</title>
        <authorList>
            <person name="Breese K."/>
            <person name="Fuchs G."/>
        </authorList>
    </citation>
    <scope>NUCLEOTIDE SEQUENCE [GENOMIC DNA]</scope>
    <scope>PROTEIN SEQUENCE OF 1-19</scope>
    <scope>FUNCTION</scope>
    <scope>CATALYTIC ACTIVITY</scope>
    <scope>ACTIVITY REGULATION</scope>
    <scope>SUBUNIT</scope>
    <source>
        <strain>DSM 6984 / CIP 107765 / K172</strain>
    </source>
</reference>
<reference key="2">
    <citation type="journal article" date="2001" name="J. Biol. Chem.">
        <title>Redox centers of 4-hydroxybenzoyl-CoA reductase, a member of the xanthine oxidase family of molybdenum-containing enzymes.</title>
        <authorList>
            <person name="Boll M."/>
            <person name="Fuchs G."/>
            <person name="Meier C."/>
            <person name="Trautwein A."/>
            <person name="El Kasmi A."/>
            <person name="Ragsdale S.W."/>
            <person name="Buchanan G."/>
            <person name="Lowe D.J."/>
        </authorList>
    </citation>
    <scope>COFACTOR</scope>
    <scope>EPR SPECTROSCOPY</scope>
    <scope>MOSSBAUER SPECTROSCOPY</scope>
    <source>
        <strain>DSM 6984 / CIP 107765 / K172</strain>
    </source>
</reference>
<reference key="3">
    <citation type="journal article" date="2004" name="Structure">
        <title>Structure of a xanthine oxidase-related 4-hydroxybenzoyl-CoA reductase with an additional [4Fe-4S] cluster and an inverted electron flow.</title>
        <authorList>
            <person name="Unciuleac M."/>
            <person name="Warkentin E."/>
            <person name="Page C.C."/>
            <person name="Boll M."/>
            <person name="Ermler U."/>
        </authorList>
    </citation>
    <scope>X-RAY CRYSTALLOGRAPHY (1.6 ANGSTROMS) IN COMPLEX WITH 2 [2FE-2S] CLUSTERS AND SUBUNIT ALPHA AND BETA</scope>
    <scope>COFACTOR</scope>
    <scope>SUBUNIT</scope>
</reference>
<sequence>MKNILRLTLNGRAREDLVPDNMLLLDYLRETVGLTGTKQGCDGGECGACTVLVDDRPRLACSTLAHQVAGKKVETVESLATQGTLSKLQAAFHEKLGTQCGFCTPGMIMASEALLRKNPSPSRDEIKAALAGNLCRCTGYVRSSKSVETAAAARLCEEGAR</sequence>
<accession>O33818</accession>
<evidence type="ECO:0000255" key="1">
    <source>
        <dbReference type="PROSITE-ProRule" id="PRU00465"/>
    </source>
</evidence>
<evidence type="ECO:0000269" key="2">
    <source>
    </source>
</evidence>
<evidence type="ECO:0000269" key="3">
    <source>
    </source>
</evidence>
<evidence type="ECO:0000269" key="4">
    <source>
    </source>
</evidence>
<evidence type="ECO:0007829" key="5">
    <source>
        <dbReference type="PDB" id="1RM6"/>
    </source>
</evidence>
<name>HCRC_THAAR</name>
<gene>
    <name type="primary">hcrC</name>
</gene>
<dbReference type="EC" id="1.1.7.1" evidence="4"/>
<dbReference type="EMBL" id="AJ001830">
    <property type="protein sequence ID" value="CAA05037.1"/>
    <property type="molecule type" value="Genomic_DNA"/>
</dbReference>
<dbReference type="PDB" id="1RM6">
    <property type="method" value="X-ray"/>
    <property type="resolution" value="1.60 A"/>
    <property type="chains" value="C/F=1-161"/>
</dbReference>
<dbReference type="PDB" id="1SB3">
    <property type="method" value="X-ray"/>
    <property type="resolution" value="2.20 A"/>
    <property type="chains" value="C/F=1-161"/>
</dbReference>
<dbReference type="PDBsum" id="1RM6"/>
<dbReference type="PDBsum" id="1SB3"/>
<dbReference type="SMR" id="O33818"/>
<dbReference type="DIP" id="DIP-48468N"/>
<dbReference type="IntAct" id="O33818">
    <property type="interactions" value="1"/>
</dbReference>
<dbReference type="KEGG" id="ag:CAA05037"/>
<dbReference type="BioCyc" id="MetaCyc:COHBENREDTHAUERA-MONOMER"/>
<dbReference type="EvolutionaryTrace" id="O33818"/>
<dbReference type="GO" id="GO:0051537">
    <property type="term" value="F:2 iron, 2 sulfur cluster binding"/>
    <property type="evidence" value="ECO:0007669"/>
    <property type="project" value="UniProtKB-KW"/>
</dbReference>
<dbReference type="GO" id="GO:0018525">
    <property type="term" value="F:4-hydroxybenzoyl-CoA reductase activity"/>
    <property type="evidence" value="ECO:0007669"/>
    <property type="project" value="UniProtKB-EC"/>
</dbReference>
<dbReference type="GO" id="GO:0046872">
    <property type="term" value="F:metal ion binding"/>
    <property type="evidence" value="ECO:0007669"/>
    <property type="project" value="UniProtKB-KW"/>
</dbReference>
<dbReference type="CDD" id="cd00207">
    <property type="entry name" value="fer2"/>
    <property type="match status" value="1"/>
</dbReference>
<dbReference type="FunFam" id="1.10.150.120:FF:000003">
    <property type="entry name" value="Carbon monoxide dehydrogenase, small subunit"/>
    <property type="match status" value="1"/>
</dbReference>
<dbReference type="FunFam" id="3.10.20.30:FF:000020">
    <property type="entry name" value="Xanthine dehydrogenase iron-sulfur subunit"/>
    <property type="match status" value="1"/>
</dbReference>
<dbReference type="Gene3D" id="3.10.20.30">
    <property type="match status" value="1"/>
</dbReference>
<dbReference type="Gene3D" id="1.10.150.120">
    <property type="entry name" value="[2Fe-2S]-binding domain"/>
    <property type="match status" value="1"/>
</dbReference>
<dbReference type="InterPro" id="IPR002888">
    <property type="entry name" value="2Fe-2S-bd"/>
</dbReference>
<dbReference type="InterPro" id="IPR036884">
    <property type="entry name" value="2Fe-2S-bd_dom_sf"/>
</dbReference>
<dbReference type="InterPro" id="IPR036010">
    <property type="entry name" value="2Fe-2S_ferredoxin-like_sf"/>
</dbReference>
<dbReference type="InterPro" id="IPR001041">
    <property type="entry name" value="2Fe-2S_ferredoxin-type"/>
</dbReference>
<dbReference type="InterPro" id="IPR006058">
    <property type="entry name" value="2Fe2S_fd_BS"/>
</dbReference>
<dbReference type="InterPro" id="IPR017606">
    <property type="entry name" value="4hydrxbenzoyl-CoA_Rdtase_gsu"/>
</dbReference>
<dbReference type="InterPro" id="IPR012675">
    <property type="entry name" value="Beta-grasp_dom_sf"/>
</dbReference>
<dbReference type="InterPro" id="IPR051452">
    <property type="entry name" value="Diverse_Oxidoreductases"/>
</dbReference>
<dbReference type="NCBIfam" id="TIGR03193">
    <property type="entry name" value="4hydroxCoAred"/>
    <property type="match status" value="1"/>
</dbReference>
<dbReference type="PANTHER" id="PTHR44379">
    <property type="entry name" value="OXIDOREDUCTASE WITH IRON-SULFUR SUBUNIT"/>
    <property type="match status" value="1"/>
</dbReference>
<dbReference type="PANTHER" id="PTHR44379:SF8">
    <property type="entry name" value="XANTHINE DEHYDROGENASE IRON-SULFUR-BINDING SUBUNIT XDHC-RELATED"/>
    <property type="match status" value="1"/>
</dbReference>
<dbReference type="Pfam" id="PF00111">
    <property type="entry name" value="Fer2"/>
    <property type="match status" value="1"/>
</dbReference>
<dbReference type="Pfam" id="PF01799">
    <property type="entry name" value="Fer2_2"/>
    <property type="match status" value="1"/>
</dbReference>
<dbReference type="SUPFAM" id="SSF54292">
    <property type="entry name" value="2Fe-2S ferredoxin-like"/>
    <property type="match status" value="1"/>
</dbReference>
<dbReference type="SUPFAM" id="SSF47741">
    <property type="entry name" value="CO dehydrogenase ISP C-domain like"/>
    <property type="match status" value="1"/>
</dbReference>
<dbReference type="PROSITE" id="PS00197">
    <property type="entry name" value="2FE2S_FER_1"/>
    <property type="match status" value="1"/>
</dbReference>
<dbReference type="PROSITE" id="PS51085">
    <property type="entry name" value="2FE2S_FER_2"/>
    <property type="match status" value="1"/>
</dbReference>
<protein>
    <recommendedName>
        <fullName>4-hydroxybenzoyl-CoA reductase subunit gamma</fullName>
        <shortName>4-HBCR subunit gamma</shortName>
        <ecNumber evidence="4">1.1.7.1</ecNumber>
    </recommendedName>
</protein>